<dbReference type="EC" id="4.1.99.1"/>
<dbReference type="EMBL" id="AE003853">
    <property type="protein sequence ID" value="AAF96074.1"/>
    <property type="molecule type" value="Genomic_DNA"/>
</dbReference>
<dbReference type="EMBL" id="AF081274">
    <property type="protein sequence ID" value="AAC33284.1"/>
    <property type="molecule type" value="Genomic_DNA"/>
</dbReference>
<dbReference type="PIR" id="B82492">
    <property type="entry name" value="B82492"/>
</dbReference>
<dbReference type="RefSeq" id="NP_232561.1">
    <property type="nucleotide sequence ID" value="NC_002506.1"/>
</dbReference>
<dbReference type="RefSeq" id="WP_000427054.1">
    <property type="nucleotide sequence ID" value="NZ_LT906615.1"/>
</dbReference>
<dbReference type="SMR" id="Q9KN05"/>
<dbReference type="STRING" id="243277.VC_A0161"/>
<dbReference type="DNASU" id="2612777"/>
<dbReference type="EnsemblBacteria" id="AAF96074">
    <property type="protein sequence ID" value="AAF96074"/>
    <property type="gene ID" value="VC_A0161"/>
</dbReference>
<dbReference type="GeneID" id="69721961"/>
<dbReference type="KEGG" id="vch:VC_A0161"/>
<dbReference type="PATRIC" id="fig|243277.26.peg.2799"/>
<dbReference type="eggNOG" id="COG3033">
    <property type="taxonomic scope" value="Bacteria"/>
</dbReference>
<dbReference type="HOGENOM" id="CLU_047223_0_0_6"/>
<dbReference type="UniPathway" id="UPA00332">
    <property type="reaction ID" value="UER00452"/>
</dbReference>
<dbReference type="Proteomes" id="UP000000584">
    <property type="component" value="Chromosome 2"/>
</dbReference>
<dbReference type="GO" id="GO:0016829">
    <property type="term" value="F:lyase activity"/>
    <property type="evidence" value="ECO:0000318"/>
    <property type="project" value="GO_Central"/>
</dbReference>
<dbReference type="GO" id="GO:0009034">
    <property type="term" value="F:tryptophanase activity"/>
    <property type="evidence" value="ECO:0007669"/>
    <property type="project" value="UniProtKB-UniRule"/>
</dbReference>
<dbReference type="FunFam" id="3.40.640.10:FF:000039">
    <property type="entry name" value="Tryptophanase"/>
    <property type="match status" value="1"/>
</dbReference>
<dbReference type="Gene3D" id="3.90.1150.10">
    <property type="entry name" value="Aspartate Aminotransferase, domain 1"/>
    <property type="match status" value="1"/>
</dbReference>
<dbReference type="Gene3D" id="3.40.640.10">
    <property type="entry name" value="Type I PLP-dependent aspartate aminotransferase-like (Major domain)"/>
    <property type="match status" value="1"/>
</dbReference>
<dbReference type="HAMAP" id="MF_00544">
    <property type="entry name" value="Tryptophanase"/>
    <property type="match status" value="1"/>
</dbReference>
<dbReference type="InterPro" id="IPR001597">
    <property type="entry name" value="ArAA_b-elim_lyase/Thr_aldolase"/>
</dbReference>
<dbReference type="InterPro" id="IPR011166">
    <property type="entry name" value="Beta-eliminating_lyase"/>
</dbReference>
<dbReference type="InterPro" id="IPR015424">
    <property type="entry name" value="PyrdxlP-dep_Trfase"/>
</dbReference>
<dbReference type="InterPro" id="IPR015421">
    <property type="entry name" value="PyrdxlP-dep_Trfase_major"/>
</dbReference>
<dbReference type="InterPro" id="IPR015422">
    <property type="entry name" value="PyrdxlP-dep_Trfase_small"/>
</dbReference>
<dbReference type="InterPro" id="IPR013440">
    <property type="entry name" value="TNase"/>
</dbReference>
<dbReference type="InterPro" id="IPR018176">
    <property type="entry name" value="Tryptophanase_CS"/>
</dbReference>
<dbReference type="NCBIfam" id="NF009709">
    <property type="entry name" value="PRK13238.1"/>
    <property type="match status" value="1"/>
</dbReference>
<dbReference type="NCBIfam" id="TIGR02617">
    <property type="entry name" value="tnaA_trp_ase"/>
    <property type="match status" value="1"/>
</dbReference>
<dbReference type="PANTHER" id="PTHR32325">
    <property type="entry name" value="BETA-ELIMINATING LYASE-LIKE PROTEIN-RELATED"/>
    <property type="match status" value="1"/>
</dbReference>
<dbReference type="PANTHER" id="PTHR32325:SF4">
    <property type="entry name" value="TRYPTOPHANASE"/>
    <property type="match status" value="1"/>
</dbReference>
<dbReference type="Pfam" id="PF01212">
    <property type="entry name" value="Beta_elim_lyase"/>
    <property type="match status" value="1"/>
</dbReference>
<dbReference type="PIRSF" id="PIRSF001386">
    <property type="entry name" value="Trpase"/>
    <property type="match status" value="1"/>
</dbReference>
<dbReference type="SUPFAM" id="SSF53383">
    <property type="entry name" value="PLP-dependent transferases"/>
    <property type="match status" value="1"/>
</dbReference>
<dbReference type="PROSITE" id="PS00853">
    <property type="entry name" value="BETA_ELIM_LYASE"/>
    <property type="match status" value="1"/>
</dbReference>
<feature type="chain" id="PRO_0000195625" description="Tryptophanase">
    <location>
        <begin position="1"/>
        <end position="472"/>
    </location>
</feature>
<feature type="modified residue" description="N6-(pyridoxal phosphate)lysine" evidence="1">
    <location>
        <position position="270"/>
    </location>
</feature>
<reference key="1">
    <citation type="journal article" date="2000" name="Nature">
        <title>DNA sequence of both chromosomes of the cholera pathogen Vibrio cholerae.</title>
        <authorList>
            <person name="Heidelberg J.F."/>
            <person name="Eisen J.A."/>
            <person name="Nelson W.C."/>
            <person name="Clayton R.A."/>
            <person name="Gwinn M.L."/>
            <person name="Dodson R.J."/>
            <person name="Haft D.H."/>
            <person name="Hickey E.K."/>
            <person name="Peterson J.D."/>
            <person name="Umayam L.A."/>
            <person name="Gill S.R."/>
            <person name="Nelson K.E."/>
            <person name="Read T.D."/>
            <person name="Tettelin H."/>
            <person name="Richardson D.L."/>
            <person name="Ermolaeva M.D."/>
            <person name="Vamathevan J.J."/>
            <person name="Bass S."/>
            <person name="Qin H."/>
            <person name="Dragoi I."/>
            <person name="Sellers P."/>
            <person name="McDonald L.A."/>
            <person name="Utterback T.R."/>
            <person name="Fleischmann R.D."/>
            <person name="Nierman W.C."/>
            <person name="White O."/>
            <person name="Salzberg S.L."/>
            <person name="Smith H.O."/>
            <person name="Colwell R.R."/>
            <person name="Mekalanos J.J."/>
            <person name="Venter J.C."/>
            <person name="Fraser C.M."/>
        </authorList>
    </citation>
    <scope>NUCLEOTIDE SEQUENCE [LARGE SCALE GENOMIC DNA]</scope>
    <source>
        <strain>ATCC 39315 / El Tor Inaba N16961</strain>
    </source>
</reference>
<reference key="2">
    <citation type="submission" date="1998-07" db="EMBL/GenBank/DDBJ databases">
        <title>Vibrio cholerae putative tryptophanase gene partial cds.</title>
        <authorList>
            <person name="Tang T.H."/>
            <person name="Ravichandran M."/>
            <person name="Johari M.R."/>
            <person name="Zainuddin Z.F."/>
        </authorList>
    </citation>
    <scope>NUCLEOTIDE SEQUENCE [GENOMIC DNA] OF 51-241</scope>
    <source>
        <strain>Bengal</strain>
    </source>
</reference>
<accession>Q9KN05</accession>
<accession>O86039</accession>
<protein>
    <recommendedName>
        <fullName>Tryptophanase</fullName>
        <ecNumber>4.1.99.1</ecNumber>
    </recommendedName>
    <alternativeName>
        <fullName>L-tryptophan indole-lyase</fullName>
        <shortName>TNase</shortName>
    </alternativeName>
</protein>
<name>TNAA_VIBCH</name>
<evidence type="ECO:0000250" key="1"/>
<evidence type="ECO:0000305" key="2"/>
<comment type="catalytic activity">
    <reaction>
        <text>L-tryptophan + H2O = indole + pyruvate + NH4(+)</text>
        <dbReference type="Rhea" id="RHEA:19553"/>
        <dbReference type="ChEBI" id="CHEBI:15361"/>
        <dbReference type="ChEBI" id="CHEBI:15377"/>
        <dbReference type="ChEBI" id="CHEBI:16881"/>
        <dbReference type="ChEBI" id="CHEBI:28938"/>
        <dbReference type="ChEBI" id="CHEBI:57912"/>
        <dbReference type="EC" id="4.1.99.1"/>
    </reaction>
</comment>
<comment type="cofactor">
    <cofactor evidence="1">
        <name>pyridoxal 5'-phosphate</name>
        <dbReference type="ChEBI" id="CHEBI:597326"/>
    </cofactor>
</comment>
<comment type="pathway">
    <text>Amino-acid degradation; L-tryptophan degradation via pyruvate pathway; indole and pyruvate from L-tryptophan: step 1/1.</text>
</comment>
<comment type="subunit">
    <text evidence="1">Homotetramer.</text>
</comment>
<comment type="similarity">
    <text evidence="2">Belongs to the beta-eliminating lyase family.</text>
</comment>
<organism>
    <name type="scientific">Vibrio cholerae serotype O1 (strain ATCC 39315 / El Tor Inaba N16961)</name>
    <dbReference type="NCBI Taxonomy" id="243277"/>
    <lineage>
        <taxon>Bacteria</taxon>
        <taxon>Pseudomonadati</taxon>
        <taxon>Pseudomonadota</taxon>
        <taxon>Gammaproteobacteria</taxon>
        <taxon>Vibrionales</taxon>
        <taxon>Vibrionaceae</taxon>
        <taxon>Vibrio</taxon>
    </lineage>
</organism>
<keyword id="KW-0456">Lyase</keyword>
<keyword id="KW-0663">Pyridoxal phosphate</keyword>
<keyword id="KW-1185">Reference proteome</keyword>
<keyword id="KW-0823">Tryptophan catabolism</keyword>
<sequence>MENFKHLPEPFRIRVIEPVKRTTREYREKAILNAGMNPFLLDSEDVFIDLLTDSGTGAITQEMQAAMFRGDEAYSGSRSYHALARAVKDIFGYEYTIPTHQGRGAEQIYIPVLIKKREKEKGLDRSKMVALSNYFFDTTQGHTQINCCVAKNVYTEEAFDTGVKADFKGNFDLEKLEQAILEAGPANVPYIVSTITCNSAGGQPVSIANLKAVYEIAQRYDIPVIMDSARFAENAYFIQQRERDYRNWSIEEITREAYKYADGLAMSAKKDAMVQMGGLLCFKDESFFDVYTECRTLCVVQEGFPTYGGLEGGAMERLAVGLYDGMRQDWLAYRINQVEYLVNGLEAIGVICQQAGGHAAFVDAGKLLPHIPADQFPAHALACELYKVAGIRAVEIGSLLLGRDPATGKQHPCPAELLRLTIPRATYTQTHMDFIIEAFEKVKANARNVKGLEFTYEPPVLRHFTARLKEKA</sequence>
<gene>
    <name type="primary">tnaA</name>
    <name type="ordered locus">VC_A0161</name>
</gene>
<proteinExistence type="inferred from homology"/>